<name>SYH_BIFLS</name>
<dbReference type="EC" id="6.1.1.21" evidence="1"/>
<dbReference type="EMBL" id="CP001095">
    <property type="protein sequence ID" value="ACJ51809.1"/>
    <property type="molecule type" value="Genomic_DNA"/>
</dbReference>
<dbReference type="EMBL" id="AP010889">
    <property type="protein sequence ID" value="BAJ68310.1"/>
    <property type="status" value="ALT_INIT"/>
    <property type="molecule type" value="Genomic_DNA"/>
</dbReference>
<dbReference type="RefSeq" id="WP_012577096.1">
    <property type="nucleotide sequence ID" value="NC_011593.1"/>
</dbReference>
<dbReference type="SMR" id="B7GPS9"/>
<dbReference type="KEGG" id="bln:Blon_0705"/>
<dbReference type="KEGG" id="blon:BLIJ_0718"/>
<dbReference type="PATRIC" id="fig|391904.8.peg.721"/>
<dbReference type="HOGENOM" id="CLU_025113_3_0_11"/>
<dbReference type="Proteomes" id="UP000001360">
    <property type="component" value="Chromosome"/>
</dbReference>
<dbReference type="GO" id="GO:0005737">
    <property type="term" value="C:cytoplasm"/>
    <property type="evidence" value="ECO:0007669"/>
    <property type="project" value="UniProtKB-SubCell"/>
</dbReference>
<dbReference type="GO" id="GO:0005524">
    <property type="term" value="F:ATP binding"/>
    <property type="evidence" value="ECO:0007669"/>
    <property type="project" value="UniProtKB-UniRule"/>
</dbReference>
<dbReference type="GO" id="GO:0004821">
    <property type="term" value="F:histidine-tRNA ligase activity"/>
    <property type="evidence" value="ECO:0007669"/>
    <property type="project" value="UniProtKB-UniRule"/>
</dbReference>
<dbReference type="GO" id="GO:0006427">
    <property type="term" value="P:histidyl-tRNA aminoacylation"/>
    <property type="evidence" value="ECO:0007669"/>
    <property type="project" value="UniProtKB-UniRule"/>
</dbReference>
<dbReference type="CDD" id="cd00773">
    <property type="entry name" value="HisRS-like_core"/>
    <property type="match status" value="1"/>
</dbReference>
<dbReference type="Gene3D" id="3.40.50.800">
    <property type="entry name" value="Anticodon-binding domain"/>
    <property type="match status" value="1"/>
</dbReference>
<dbReference type="Gene3D" id="3.30.930.10">
    <property type="entry name" value="Bira Bifunctional Protein, Domain 2"/>
    <property type="match status" value="1"/>
</dbReference>
<dbReference type="HAMAP" id="MF_00127">
    <property type="entry name" value="His_tRNA_synth"/>
    <property type="match status" value="1"/>
</dbReference>
<dbReference type="InterPro" id="IPR006195">
    <property type="entry name" value="aa-tRNA-synth_II"/>
</dbReference>
<dbReference type="InterPro" id="IPR045864">
    <property type="entry name" value="aa-tRNA-synth_II/BPL/LPL"/>
</dbReference>
<dbReference type="InterPro" id="IPR004154">
    <property type="entry name" value="Anticodon-bd"/>
</dbReference>
<dbReference type="InterPro" id="IPR036621">
    <property type="entry name" value="Anticodon-bd_dom_sf"/>
</dbReference>
<dbReference type="InterPro" id="IPR015807">
    <property type="entry name" value="His-tRNA-ligase"/>
</dbReference>
<dbReference type="InterPro" id="IPR041715">
    <property type="entry name" value="HisRS-like_core"/>
</dbReference>
<dbReference type="InterPro" id="IPR004516">
    <property type="entry name" value="HisRS/HisZ"/>
</dbReference>
<dbReference type="NCBIfam" id="TIGR00442">
    <property type="entry name" value="hisS"/>
    <property type="match status" value="1"/>
</dbReference>
<dbReference type="PANTHER" id="PTHR11476:SF7">
    <property type="entry name" value="HISTIDINE--TRNA LIGASE"/>
    <property type="match status" value="1"/>
</dbReference>
<dbReference type="PANTHER" id="PTHR11476">
    <property type="entry name" value="HISTIDYL-TRNA SYNTHETASE"/>
    <property type="match status" value="1"/>
</dbReference>
<dbReference type="Pfam" id="PF03129">
    <property type="entry name" value="HGTP_anticodon"/>
    <property type="match status" value="1"/>
</dbReference>
<dbReference type="Pfam" id="PF13393">
    <property type="entry name" value="tRNA-synt_His"/>
    <property type="match status" value="1"/>
</dbReference>
<dbReference type="PIRSF" id="PIRSF001549">
    <property type="entry name" value="His-tRNA_synth"/>
    <property type="match status" value="1"/>
</dbReference>
<dbReference type="SUPFAM" id="SSF52954">
    <property type="entry name" value="Class II aaRS ABD-related"/>
    <property type="match status" value="1"/>
</dbReference>
<dbReference type="SUPFAM" id="SSF55681">
    <property type="entry name" value="Class II aaRS and biotin synthetases"/>
    <property type="match status" value="1"/>
</dbReference>
<dbReference type="PROSITE" id="PS50862">
    <property type="entry name" value="AA_TRNA_LIGASE_II"/>
    <property type="match status" value="1"/>
</dbReference>
<gene>
    <name evidence="1" type="primary">hisS</name>
    <name type="ordered locus">Blon_0705</name>
    <name type="ordered locus">BLIJ_0718</name>
</gene>
<reference key="1">
    <citation type="journal article" date="2008" name="Proc. Natl. Acad. Sci. U.S.A.">
        <title>The genome sequence of Bifidobacterium longum subsp. infantis reveals adaptations for milk utilization within the infant microbiome.</title>
        <authorList>
            <person name="Sela D.A."/>
            <person name="Chapman J."/>
            <person name="Adeuya A."/>
            <person name="Kim J.H."/>
            <person name="Chen F."/>
            <person name="Whitehead T.R."/>
            <person name="Lapidus A."/>
            <person name="Rokhsar D.S."/>
            <person name="Lebrilla C.B."/>
            <person name="German J.B."/>
            <person name="Price N.P."/>
            <person name="Richardson P.M."/>
            <person name="Mills D.A."/>
        </authorList>
    </citation>
    <scope>NUCLEOTIDE SEQUENCE [LARGE SCALE GENOMIC DNA]</scope>
    <source>
        <strain>ATCC 15697 / DSM 20088 / JCM 1222 / NCTC 11817 / S12</strain>
    </source>
</reference>
<reference key="2">
    <citation type="journal article" date="2011" name="Nature">
        <title>Bifidobacteria can protect from enteropathogenic infection through production of acetate.</title>
        <authorList>
            <person name="Fukuda S."/>
            <person name="Toh H."/>
            <person name="Hase K."/>
            <person name="Oshima K."/>
            <person name="Nakanishi Y."/>
            <person name="Yoshimura K."/>
            <person name="Tobe T."/>
            <person name="Clarke J.M."/>
            <person name="Topping D.L."/>
            <person name="Suzuki T."/>
            <person name="Taylor T.D."/>
            <person name="Itoh K."/>
            <person name="Kikuchi J."/>
            <person name="Morita H."/>
            <person name="Hattori M."/>
            <person name="Ohno H."/>
        </authorList>
    </citation>
    <scope>NUCLEOTIDE SEQUENCE [LARGE SCALE GENOMIC DNA]</scope>
    <source>
        <strain>ATCC 15697 / DSM 20088 / JCM 1222 / NCTC 11817 / S12</strain>
    </source>
</reference>
<proteinExistence type="inferred from homology"/>
<comment type="catalytic activity">
    <reaction evidence="1">
        <text>tRNA(His) + L-histidine + ATP = L-histidyl-tRNA(His) + AMP + diphosphate + H(+)</text>
        <dbReference type="Rhea" id="RHEA:17313"/>
        <dbReference type="Rhea" id="RHEA-COMP:9665"/>
        <dbReference type="Rhea" id="RHEA-COMP:9689"/>
        <dbReference type="ChEBI" id="CHEBI:15378"/>
        <dbReference type="ChEBI" id="CHEBI:30616"/>
        <dbReference type="ChEBI" id="CHEBI:33019"/>
        <dbReference type="ChEBI" id="CHEBI:57595"/>
        <dbReference type="ChEBI" id="CHEBI:78442"/>
        <dbReference type="ChEBI" id="CHEBI:78527"/>
        <dbReference type="ChEBI" id="CHEBI:456215"/>
        <dbReference type="EC" id="6.1.1.21"/>
    </reaction>
</comment>
<comment type="subunit">
    <text evidence="1">Homodimer.</text>
</comment>
<comment type="subcellular location">
    <subcellularLocation>
        <location evidence="1">Cytoplasm</location>
    </subcellularLocation>
</comment>
<comment type="similarity">
    <text evidence="1">Belongs to the class-II aminoacyl-tRNA synthetase family.</text>
</comment>
<comment type="sequence caution" evidence="2">
    <conflict type="erroneous initiation">
        <sequence resource="EMBL-CDS" id="BAJ68310"/>
    </conflict>
    <text>Truncated N-terminus.</text>
</comment>
<evidence type="ECO:0000255" key="1">
    <source>
        <dbReference type="HAMAP-Rule" id="MF_00127"/>
    </source>
</evidence>
<evidence type="ECO:0000305" key="2"/>
<feature type="chain" id="PRO_1000199116" description="Histidine--tRNA ligase">
    <location>
        <begin position="1"/>
        <end position="466"/>
    </location>
</feature>
<accession>B7GPS9</accession>
<accession>E8MQN5</accession>
<keyword id="KW-0030">Aminoacyl-tRNA synthetase</keyword>
<keyword id="KW-0067">ATP-binding</keyword>
<keyword id="KW-0963">Cytoplasm</keyword>
<keyword id="KW-0436">Ligase</keyword>
<keyword id="KW-0547">Nucleotide-binding</keyword>
<keyword id="KW-0648">Protein biosynthesis</keyword>
<organism>
    <name type="scientific">Bifidobacterium longum subsp. infantis (strain ATCC 15697 / DSM 20088 / JCM 1222 / NCTC 11817 / S12)</name>
    <dbReference type="NCBI Taxonomy" id="391904"/>
    <lineage>
        <taxon>Bacteria</taxon>
        <taxon>Bacillati</taxon>
        <taxon>Actinomycetota</taxon>
        <taxon>Actinomycetes</taxon>
        <taxon>Bifidobacteriales</taxon>
        <taxon>Bifidobacteriaceae</taxon>
        <taxon>Bifidobacterium</taxon>
    </lineage>
</organism>
<protein>
    <recommendedName>
        <fullName evidence="1">Histidine--tRNA ligase</fullName>
        <ecNumber evidence="1">6.1.1.21</ecNumber>
    </recommendedName>
    <alternativeName>
        <fullName evidence="1">Histidyl-tRNA synthetase</fullName>
        <shortName evidence="1">HisRS</shortName>
    </alternativeName>
</protein>
<sequence length="466" mass="50352">MAKGASISGFPEWLPSERVVEQRVIDTLRKVFELNGFIGIETRAVETGASLLKKGETSKEIYLLSRLQEVGHESDTPIEERLGLHFDLTVPLSRYVVEHSGALAFPFKRWQIQKVWRGERPQEGRFREFVQADIDVIGAGDLPDHYEVELPLVMVSALEELRAYGLPKATVHANNRKLSEGFYRGLGLTDVEGVLREIDKLDKIGADEVARLLTETCGATEAQARACLELAELTASDGAELAAKFDALCESHGIAKDSEAYTLARQGLDTLAMIVDEAAAIRPGSVIADLKIARGLDYYTGSVYETFLDGAASLGSICSGGRYDNLASQGNRKYPGVGLSIGLSRLVSYMLHAAGAHANRVSPAAVLVAVWNEEDRPAANRIANQLRARGIATDVAPTAAKLGKQIKYADKLGIPYVWFPATAAEGAEGAEPAGDEVKNIVTGEQVAADCTSWEPDTVVAQQTVEI</sequence>